<name>RIBB_SHESH</name>
<reference key="1">
    <citation type="submission" date="2007-08" db="EMBL/GenBank/DDBJ databases">
        <title>Complete sequence of Shewanella sediminis HAW-EB3.</title>
        <authorList>
            <consortium name="US DOE Joint Genome Institute"/>
            <person name="Copeland A."/>
            <person name="Lucas S."/>
            <person name="Lapidus A."/>
            <person name="Barry K."/>
            <person name="Glavina del Rio T."/>
            <person name="Dalin E."/>
            <person name="Tice H."/>
            <person name="Pitluck S."/>
            <person name="Chertkov O."/>
            <person name="Brettin T."/>
            <person name="Bruce D."/>
            <person name="Detter J.C."/>
            <person name="Han C."/>
            <person name="Schmutz J."/>
            <person name="Larimer F."/>
            <person name="Land M."/>
            <person name="Hauser L."/>
            <person name="Kyrpides N."/>
            <person name="Kim E."/>
            <person name="Zhao J.-S."/>
            <person name="Richardson P."/>
        </authorList>
    </citation>
    <scope>NUCLEOTIDE SEQUENCE [LARGE SCALE GENOMIC DNA]</scope>
    <source>
        <strain>HAW-EB3</strain>
    </source>
</reference>
<accession>A8G1K1</accession>
<protein>
    <recommendedName>
        <fullName evidence="1">3,4-dihydroxy-2-butanone 4-phosphate synthase</fullName>
        <shortName evidence="1">DHBP synthase</shortName>
        <ecNumber evidence="1">4.1.99.12</ecNumber>
    </recommendedName>
</protein>
<sequence length="217" mass="23287">MNQSLLSPFGTAIERVETALISLKQGRGVLVVDDEDRENEGDLIYSAETLTNEQMALLIREGSGIVCLCLPDERVKHLALPPMVENNSSQYGTAFTVSIEAKEGVTTGVSAADRVTTIKTAIADDAQPDDLARPGHVYPLRAQPGGVMTRRGHTEGTIDLMILAGLKPAGVLCEITNPDGTMARLAEIISFGAKHDLPVLTIEDIVEYRKSLMAEAS</sequence>
<feature type="chain" id="PRO_1000077271" description="3,4-dihydroxy-2-butanone 4-phosphate synthase">
    <location>
        <begin position="1"/>
        <end position="217"/>
    </location>
</feature>
<feature type="binding site" evidence="1">
    <location>
        <begin position="37"/>
        <end position="38"/>
    </location>
    <ligand>
        <name>D-ribulose 5-phosphate</name>
        <dbReference type="ChEBI" id="CHEBI:58121"/>
    </ligand>
</feature>
<feature type="binding site" evidence="1">
    <location>
        <position position="38"/>
    </location>
    <ligand>
        <name>Mg(2+)</name>
        <dbReference type="ChEBI" id="CHEBI:18420"/>
        <label>1</label>
    </ligand>
</feature>
<feature type="binding site" evidence="1">
    <location>
        <position position="38"/>
    </location>
    <ligand>
        <name>Mg(2+)</name>
        <dbReference type="ChEBI" id="CHEBI:18420"/>
        <label>2</label>
    </ligand>
</feature>
<feature type="binding site" evidence="1">
    <location>
        <position position="42"/>
    </location>
    <ligand>
        <name>D-ribulose 5-phosphate</name>
        <dbReference type="ChEBI" id="CHEBI:58121"/>
    </ligand>
</feature>
<feature type="binding site" evidence="1">
    <location>
        <begin position="150"/>
        <end position="154"/>
    </location>
    <ligand>
        <name>D-ribulose 5-phosphate</name>
        <dbReference type="ChEBI" id="CHEBI:58121"/>
    </ligand>
</feature>
<feature type="binding site" evidence="1">
    <location>
        <position position="153"/>
    </location>
    <ligand>
        <name>Mg(2+)</name>
        <dbReference type="ChEBI" id="CHEBI:18420"/>
        <label>2</label>
    </ligand>
</feature>
<feature type="binding site" evidence="1">
    <location>
        <position position="174"/>
    </location>
    <ligand>
        <name>D-ribulose 5-phosphate</name>
        <dbReference type="ChEBI" id="CHEBI:58121"/>
    </ligand>
</feature>
<feature type="site" description="Essential for catalytic activity" evidence="1">
    <location>
        <position position="136"/>
    </location>
</feature>
<feature type="site" description="Essential for catalytic activity" evidence="1">
    <location>
        <position position="174"/>
    </location>
</feature>
<organism>
    <name type="scientific">Shewanella sediminis (strain HAW-EB3)</name>
    <dbReference type="NCBI Taxonomy" id="425104"/>
    <lineage>
        <taxon>Bacteria</taxon>
        <taxon>Pseudomonadati</taxon>
        <taxon>Pseudomonadota</taxon>
        <taxon>Gammaproteobacteria</taxon>
        <taxon>Alteromonadales</taxon>
        <taxon>Shewanellaceae</taxon>
        <taxon>Shewanella</taxon>
    </lineage>
</organism>
<comment type="function">
    <text evidence="1">Catalyzes the conversion of D-ribulose 5-phosphate to formate and 3,4-dihydroxy-2-butanone 4-phosphate.</text>
</comment>
<comment type="catalytic activity">
    <reaction evidence="1">
        <text>D-ribulose 5-phosphate = (2S)-2-hydroxy-3-oxobutyl phosphate + formate + H(+)</text>
        <dbReference type="Rhea" id="RHEA:18457"/>
        <dbReference type="ChEBI" id="CHEBI:15378"/>
        <dbReference type="ChEBI" id="CHEBI:15740"/>
        <dbReference type="ChEBI" id="CHEBI:58121"/>
        <dbReference type="ChEBI" id="CHEBI:58830"/>
        <dbReference type="EC" id="4.1.99.12"/>
    </reaction>
</comment>
<comment type="cofactor">
    <cofactor evidence="1">
        <name>Mg(2+)</name>
        <dbReference type="ChEBI" id="CHEBI:18420"/>
    </cofactor>
    <cofactor evidence="1">
        <name>Mn(2+)</name>
        <dbReference type="ChEBI" id="CHEBI:29035"/>
    </cofactor>
    <text evidence="1">Binds 2 divalent metal cations per subunit. Magnesium or manganese.</text>
</comment>
<comment type="pathway">
    <text evidence="1">Cofactor biosynthesis; riboflavin biosynthesis; 2-hydroxy-3-oxobutyl phosphate from D-ribulose 5-phosphate: step 1/1.</text>
</comment>
<comment type="subunit">
    <text evidence="1">Homodimer.</text>
</comment>
<comment type="similarity">
    <text evidence="1">Belongs to the DHBP synthase family.</text>
</comment>
<dbReference type="EC" id="4.1.99.12" evidence="1"/>
<dbReference type="EMBL" id="CP000821">
    <property type="protein sequence ID" value="ABV38974.1"/>
    <property type="molecule type" value="Genomic_DNA"/>
</dbReference>
<dbReference type="RefSeq" id="WP_012144701.1">
    <property type="nucleotide sequence ID" value="NC_009831.1"/>
</dbReference>
<dbReference type="SMR" id="A8G1K1"/>
<dbReference type="STRING" id="425104.Ssed_4372"/>
<dbReference type="KEGG" id="sse:Ssed_4372"/>
<dbReference type="eggNOG" id="COG0108">
    <property type="taxonomic scope" value="Bacteria"/>
</dbReference>
<dbReference type="HOGENOM" id="CLU_020273_3_0_6"/>
<dbReference type="OrthoDB" id="9793111at2"/>
<dbReference type="UniPathway" id="UPA00275">
    <property type="reaction ID" value="UER00399"/>
</dbReference>
<dbReference type="Proteomes" id="UP000002015">
    <property type="component" value="Chromosome"/>
</dbReference>
<dbReference type="GO" id="GO:0005829">
    <property type="term" value="C:cytosol"/>
    <property type="evidence" value="ECO:0007669"/>
    <property type="project" value="TreeGrafter"/>
</dbReference>
<dbReference type="GO" id="GO:0008686">
    <property type="term" value="F:3,4-dihydroxy-2-butanone-4-phosphate synthase activity"/>
    <property type="evidence" value="ECO:0007669"/>
    <property type="project" value="UniProtKB-UniRule"/>
</dbReference>
<dbReference type="GO" id="GO:0000287">
    <property type="term" value="F:magnesium ion binding"/>
    <property type="evidence" value="ECO:0007669"/>
    <property type="project" value="UniProtKB-UniRule"/>
</dbReference>
<dbReference type="GO" id="GO:0030145">
    <property type="term" value="F:manganese ion binding"/>
    <property type="evidence" value="ECO:0007669"/>
    <property type="project" value="UniProtKB-UniRule"/>
</dbReference>
<dbReference type="GO" id="GO:0009231">
    <property type="term" value="P:riboflavin biosynthetic process"/>
    <property type="evidence" value="ECO:0007669"/>
    <property type="project" value="UniProtKB-UniRule"/>
</dbReference>
<dbReference type="FunFam" id="3.90.870.10:FF:000002">
    <property type="entry name" value="3,4-dihydroxy-2-butanone 4-phosphate synthase"/>
    <property type="match status" value="1"/>
</dbReference>
<dbReference type="Gene3D" id="3.90.870.10">
    <property type="entry name" value="DHBP synthase"/>
    <property type="match status" value="1"/>
</dbReference>
<dbReference type="HAMAP" id="MF_00180">
    <property type="entry name" value="RibB"/>
    <property type="match status" value="1"/>
</dbReference>
<dbReference type="InterPro" id="IPR017945">
    <property type="entry name" value="DHBP_synth_RibB-like_a/b_dom"/>
</dbReference>
<dbReference type="InterPro" id="IPR000422">
    <property type="entry name" value="DHBP_synthase_RibB"/>
</dbReference>
<dbReference type="NCBIfam" id="TIGR00506">
    <property type="entry name" value="ribB"/>
    <property type="match status" value="1"/>
</dbReference>
<dbReference type="PANTHER" id="PTHR21327:SF38">
    <property type="entry name" value="3,4-DIHYDROXY-2-BUTANONE 4-PHOSPHATE SYNTHASE"/>
    <property type="match status" value="1"/>
</dbReference>
<dbReference type="PANTHER" id="PTHR21327">
    <property type="entry name" value="GTP CYCLOHYDROLASE II-RELATED"/>
    <property type="match status" value="1"/>
</dbReference>
<dbReference type="Pfam" id="PF00926">
    <property type="entry name" value="DHBP_synthase"/>
    <property type="match status" value="1"/>
</dbReference>
<dbReference type="SUPFAM" id="SSF55821">
    <property type="entry name" value="YrdC/RibB"/>
    <property type="match status" value="1"/>
</dbReference>
<keyword id="KW-0456">Lyase</keyword>
<keyword id="KW-0460">Magnesium</keyword>
<keyword id="KW-0464">Manganese</keyword>
<keyword id="KW-0479">Metal-binding</keyword>
<keyword id="KW-1185">Reference proteome</keyword>
<keyword id="KW-0686">Riboflavin biosynthesis</keyword>
<evidence type="ECO:0000255" key="1">
    <source>
        <dbReference type="HAMAP-Rule" id="MF_00180"/>
    </source>
</evidence>
<proteinExistence type="inferred from homology"/>
<gene>
    <name evidence="1" type="primary">ribB</name>
    <name type="ordered locus">Ssed_4372</name>
</gene>